<accession>Q9LTX4</accession>
<gene>
    <name type="ordered locus">At5g49960</name>
    <name type="ORF">K9P8.10</name>
</gene>
<reference key="1">
    <citation type="journal article" date="2000" name="DNA Res.">
        <title>Structural analysis of Arabidopsis thaliana chromosome 5. X. Sequence features of the regions of 3,076,755 bp covered by sixty P1 and TAC clones.</title>
        <authorList>
            <person name="Sato S."/>
            <person name="Nakamura Y."/>
            <person name="Kaneko T."/>
            <person name="Katoh T."/>
            <person name="Asamizu E."/>
            <person name="Kotani H."/>
            <person name="Tabata S."/>
        </authorList>
    </citation>
    <scope>NUCLEOTIDE SEQUENCE [LARGE SCALE GENOMIC DNA]</scope>
    <source>
        <strain>cv. Columbia</strain>
    </source>
</reference>
<reference key="2">
    <citation type="journal article" date="2017" name="Plant J.">
        <title>Araport11: a complete reannotation of the Arabidopsis thaliana reference genome.</title>
        <authorList>
            <person name="Cheng C.Y."/>
            <person name="Krishnakumar V."/>
            <person name="Chan A.P."/>
            <person name="Thibaud-Nissen F."/>
            <person name="Schobel S."/>
            <person name="Town C.D."/>
        </authorList>
    </citation>
    <scope>GENOME REANNOTATION</scope>
    <source>
        <strain>cv. Columbia</strain>
    </source>
</reference>
<name>POLLU_ARATH</name>
<dbReference type="EMBL" id="AB024032">
    <property type="protein sequence ID" value="BAA97017.1"/>
    <property type="molecule type" value="Genomic_DNA"/>
</dbReference>
<dbReference type="EMBL" id="CP002688">
    <property type="protein sequence ID" value="AED95877.1"/>
    <property type="molecule type" value="Genomic_DNA"/>
</dbReference>
<dbReference type="RefSeq" id="NP_199807.1">
    <property type="nucleotide sequence ID" value="NM_124375.3"/>
</dbReference>
<dbReference type="SMR" id="Q9LTX4"/>
<dbReference type="FunCoup" id="Q9LTX4">
    <property type="interactions" value="2"/>
</dbReference>
<dbReference type="STRING" id="3702.Q9LTX4"/>
<dbReference type="iPTMnet" id="Q9LTX4"/>
<dbReference type="SwissPalm" id="Q9LTX4"/>
<dbReference type="PaxDb" id="3702-AT5G49960.1"/>
<dbReference type="ProteomicsDB" id="226288"/>
<dbReference type="EnsemblPlants" id="AT5G49960.1">
    <property type="protein sequence ID" value="AT5G49960.1"/>
    <property type="gene ID" value="AT5G49960"/>
</dbReference>
<dbReference type="GeneID" id="835060"/>
<dbReference type="Gramene" id="AT5G49960.1">
    <property type="protein sequence ID" value="AT5G49960.1"/>
    <property type="gene ID" value="AT5G49960"/>
</dbReference>
<dbReference type="KEGG" id="ath:AT5G49960"/>
<dbReference type="Araport" id="AT5G49960"/>
<dbReference type="TAIR" id="AT5G49960"/>
<dbReference type="eggNOG" id="ENOG502QU6W">
    <property type="taxonomic scope" value="Eukaryota"/>
</dbReference>
<dbReference type="HOGENOM" id="CLU_012980_0_0_1"/>
<dbReference type="InParanoid" id="Q9LTX4"/>
<dbReference type="OMA" id="YVVDVCF"/>
<dbReference type="OrthoDB" id="414047at2759"/>
<dbReference type="PhylomeDB" id="Q9LTX4"/>
<dbReference type="PRO" id="PR:Q9LTX4"/>
<dbReference type="Proteomes" id="UP000006548">
    <property type="component" value="Chromosome 5"/>
</dbReference>
<dbReference type="ExpressionAtlas" id="Q9LTX4">
    <property type="expression patterns" value="baseline and differential"/>
</dbReference>
<dbReference type="GO" id="GO:0031965">
    <property type="term" value="C:nuclear membrane"/>
    <property type="evidence" value="ECO:0007669"/>
    <property type="project" value="UniProtKB-SubCell"/>
</dbReference>
<dbReference type="GO" id="GO:0034220">
    <property type="term" value="P:monoatomic ion transmembrane transport"/>
    <property type="evidence" value="ECO:0007669"/>
    <property type="project" value="UniProtKB-KW"/>
</dbReference>
<dbReference type="Gene3D" id="3.40.50.720">
    <property type="entry name" value="NAD(P)-binding Rossmann-like Domain"/>
    <property type="match status" value="1"/>
</dbReference>
<dbReference type="InterPro" id="IPR044849">
    <property type="entry name" value="CASTOR/POLLUX/SYM8-like"/>
</dbReference>
<dbReference type="InterPro" id="IPR010420">
    <property type="entry name" value="CASTOR/POLLUX/SYM8_dom"/>
</dbReference>
<dbReference type="InterPro" id="IPR036291">
    <property type="entry name" value="NAD(P)-bd_dom_sf"/>
</dbReference>
<dbReference type="InterPro" id="IPR003148">
    <property type="entry name" value="RCK_N"/>
</dbReference>
<dbReference type="PANTHER" id="PTHR31563">
    <property type="entry name" value="ION CHANNEL POLLUX-RELATED"/>
    <property type="match status" value="1"/>
</dbReference>
<dbReference type="PANTHER" id="PTHR31563:SF10">
    <property type="entry name" value="ION CHANNEL POLLUX-RELATED"/>
    <property type="match status" value="1"/>
</dbReference>
<dbReference type="Pfam" id="PF06241">
    <property type="entry name" value="Castor_Poll_mid"/>
    <property type="match status" value="1"/>
</dbReference>
<dbReference type="Pfam" id="PF22614">
    <property type="entry name" value="Slo-like_RCK"/>
    <property type="match status" value="1"/>
</dbReference>
<dbReference type="SUPFAM" id="SSF51735">
    <property type="entry name" value="NAD(P)-binding Rossmann-fold domains"/>
    <property type="match status" value="1"/>
</dbReference>
<dbReference type="PROSITE" id="PS51201">
    <property type="entry name" value="RCK_N"/>
    <property type="match status" value="2"/>
</dbReference>
<organism>
    <name type="scientific">Arabidopsis thaliana</name>
    <name type="common">Mouse-ear cress</name>
    <dbReference type="NCBI Taxonomy" id="3702"/>
    <lineage>
        <taxon>Eukaryota</taxon>
        <taxon>Viridiplantae</taxon>
        <taxon>Streptophyta</taxon>
        <taxon>Embryophyta</taxon>
        <taxon>Tracheophyta</taxon>
        <taxon>Spermatophyta</taxon>
        <taxon>Magnoliopsida</taxon>
        <taxon>eudicotyledons</taxon>
        <taxon>Gunneridae</taxon>
        <taxon>Pentapetalae</taxon>
        <taxon>rosids</taxon>
        <taxon>malvids</taxon>
        <taxon>Brassicales</taxon>
        <taxon>Brassicaceae</taxon>
        <taxon>Camelineae</taxon>
        <taxon>Arabidopsis</taxon>
    </lineage>
</organism>
<sequence>MPIHTPRRTSLFQRSKTLPTNSYRRFTSPVIPTFRYDDGDTVSYDGDDSSNLPTVPNPEEKPVPVPSQSPSQRITRLWTQFSLTHCLKFICSCSFTYVMFLRSKVSRLEAENIILLTRCNSSSDNNEMEETNSRAVVFFSVIITFVLPFLLYMYLDDLSHVKNLLRRTNQKKEDVPLKKRLAYSLDVCFSVYPYAKLLALLLATVVLIVYGGLALYAVSDCGVDEALWLSWTFVADSGSHADRVGVGARIVSVAISAGGMLIFATMLGLISDAISKMVDSLRKGKSEVLESNHILILGWSDKLGSLLKQLAIANKSIGGGVVVVLAERDKEEMETDIAKFEFDLMGTSVICRSGSPLILADLKKVSVSNARAIIVLGSDENADQSDARALRVVLSLTGVKEGWKGHVVVEMCDLDNEPLVKLVGGERIETVVAHDVIGRLMIQCALQPGLAQIWEDILGFENAEFYIKKWPQLDGYCFEDVLISFPNAIPCGVKVAADGKIVLNPSDDYVLKEGDEILVIAEDDDTYAPGSLPEVRMCHFPKMQDPPKYPEKILFCGWRRDIDDMIKVLEALLAPGSELWMFNEVPDQEREKKLTDAGLNISKLVNIKLVHRQGNAVIRRHLESLPLETFDSILILAEQSLENSIVHSDSRSLATLLLIRDIQSKRLPYKDAKSSALRISGFPNCCWIRKMQQASDKSIVISEILDSRTKNLVSVSRISDYVLSNELVSMALAMVAEDKQINRVLKELFAEKGNELCIRPAEFYIYDQEEVCFYDIMRRARQRQEIIIGYRLAGMEQAVINPTDKSKLTKWSLDDVFVVIASSQ</sequence>
<feature type="chain" id="PRO_0000165856" description="Probable ion channel POLLUX">
    <location>
        <begin position="1"/>
        <end position="824"/>
    </location>
</feature>
<feature type="transmembrane region" description="Helical" evidence="2">
    <location>
        <begin position="81"/>
        <end position="101"/>
    </location>
</feature>
<feature type="transmembrane region" description="Helical" evidence="2">
    <location>
        <begin position="135"/>
        <end position="155"/>
    </location>
</feature>
<feature type="transmembrane region" description="Helical" evidence="2">
    <location>
        <begin position="198"/>
        <end position="218"/>
    </location>
</feature>
<feature type="transmembrane region" description="Helical" evidence="2">
    <location>
        <begin position="250"/>
        <end position="270"/>
    </location>
</feature>
<feature type="domain" description="RCK N-terminal 1" evidence="3">
    <location>
        <begin position="291"/>
        <end position="432"/>
    </location>
</feature>
<feature type="domain" description="RCK N-terminal 2" evidence="3">
    <location>
        <begin position="550"/>
        <end position="699"/>
    </location>
</feature>
<feature type="region of interest" description="Disordered" evidence="4">
    <location>
        <begin position="45"/>
        <end position="70"/>
    </location>
</feature>
<feature type="coiled-coil region" evidence="2">
    <location>
        <begin position="325"/>
        <end position="346"/>
    </location>
</feature>
<feature type="compositionally biased region" description="Low complexity" evidence="4">
    <location>
        <begin position="45"/>
        <end position="54"/>
    </location>
</feature>
<keyword id="KW-0175">Coiled coil</keyword>
<keyword id="KW-0407">Ion channel</keyword>
<keyword id="KW-0406">Ion transport</keyword>
<keyword id="KW-0472">Membrane</keyword>
<keyword id="KW-0539">Nucleus</keyword>
<keyword id="KW-1185">Reference proteome</keyword>
<keyword id="KW-0812">Transmembrane</keyword>
<keyword id="KW-1133">Transmembrane helix</keyword>
<keyword id="KW-0813">Transport</keyword>
<evidence type="ECO:0000250" key="1"/>
<evidence type="ECO:0000255" key="2"/>
<evidence type="ECO:0000255" key="3">
    <source>
        <dbReference type="PROSITE-ProRule" id="PRU00543"/>
    </source>
</evidence>
<evidence type="ECO:0000256" key="4">
    <source>
        <dbReference type="SAM" id="MobiDB-lite"/>
    </source>
</evidence>
<evidence type="ECO:0000305" key="5"/>
<protein>
    <recommendedName>
        <fullName>Probable ion channel POLLUX</fullName>
        <shortName>AtPOLLUX</shortName>
    </recommendedName>
    <alternativeName>
        <fullName>Probable ion channel DMI1</fullName>
    </alternativeName>
</protein>
<comment type="subcellular location">
    <subcellularLocation>
        <location evidence="1">Nucleus membrane</location>
        <topology evidence="1">Multi-pass membrane protein</topology>
    </subcellularLocation>
</comment>
<comment type="miscellaneous">
    <text>The absence of an ortholog of CASTOR may explain the inability of Arabidopsis to form root symbioses with mycorrhizal fungi.</text>
</comment>
<comment type="similarity">
    <text evidence="5">Belongs to the castor/pollux (TC 1.A.1.23) family.</text>
</comment>
<proteinExistence type="evidence at transcript level"/>